<gene>
    <name type="primary">ASZ1</name>
    <name type="synonym">GASZ</name>
</gene>
<comment type="function">
    <text evidence="1">Plays a central role during spermatogenesis by repressing transposable elements and preventing their mobilization, which is essential for the germline integrity. Acts via the piRNA metabolic process, which mediates the repression of transposable elements during meiosis by forming complexes composed of piRNAs and Piwi proteins and governs the methylation and subsequent repression of transposons. Its association with pi-bodies suggests a participation in the primary piRNAs metabolic process. Required prior to the pachytene stage to facilitate the production of multiple types of piRNAs, including those associated with repeats involved in the regulation of retrotransposons. May act by mediating protein-protein interactions during germ cell maturation (By similarity).</text>
</comment>
<comment type="subunit">
    <text evidence="1">Interacts with DDX4, PIWIL1, RANBP9 and TDRD1.</text>
</comment>
<comment type="subcellular location">
    <subcellularLocation>
        <location evidence="1">Cytoplasm</location>
    </subcellularLocation>
    <text evidence="1">Component of the meiotic nuage, also named P granule, a germ-cell-specific organelle required to repress transposon activity during meiosis. Specifically localizes to pi-bodies, a subset of the nuage which contains primary piRNAs (By similarity).</text>
</comment>
<name>ASZ1_RABIT</name>
<keyword id="KW-0040">ANK repeat</keyword>
<keyword id="KW-0963">Cytoplasm</keyword>
<keyword id="KW-0217">Developmental protein</keyword>
<keyword id="KW-0221">Differentiation</keyword>
<keyword id="KW-0469">Meiosis</keyword>
<keyword id="KW-0597">Phosphoprotein</keyword>
<keyword id="KW-1185">Reference proteome</keyword>
<keyword id="KW-0677">Repeat</keyword>
<keyword id="KW-0943">RNA-mediated gene silencing</keyword>
<keyword id="KW-0744">Spermatogenesis</keyword>
<proteinExistence type="inferred from homology"/>
<feature type="chain" id="PRO_0000260396" description="Ankyrin repeat, SAM and basic leucine zipper domain-containing protein 1">
    <location>
        <begin position="1"/>
        <end position="475"/>
    </location>
</feature>
<feature type="repeat" description="ANK 1">
    <location>
        <begin position="45"/>
        <end position="74"/>
    </location>
</feature>
<feature type="repeat" description="ANK 2">
    <location>
        <begin position="78"/>
        <end position="107"/>
    </location>
</feature>
<feature type="repeat" description="ANK 3">
    <location>
        <begin position="110"/>
        <end position="144"/>
    </location>
</feature>
<feature type="repeat" description="ANK 4">
    <location>
        <begin position="148"/>
        <end position="177"/>
    </location>
</feature>
<feature type="repeat" description="ANK 5">
    <location>
        <begin position="181"/>
        <end position="210"/>
    </location>
</feature>
<feature type="repeat" description="ANK 6">
    <location>
        <begin position="214"/>
        <end position="243"/>
    </location>
</feature>
<feature type="domain" description="SAM">
    <location>
        <begin position="272"/>
        <end position="334"/>
    </location>
</feature>
<feature type="region of interest" description="Disordered" evidence="3">
    <location>
        <begin position="1"/>
        <end position="38"/>
    </location>
</feature>
<feature type="modified residue" description="Phosphoserine" evidence="2">
    <location>
        <position position="17"/>
    </location>
</feature>
<feature type="modified residue" description="Phosphoserine" evidence="2">
    <location>
        <position position="18"/>
    </location>
</feature>
<feature type="modified residue" description="Phosphoserine" evidence="2">
    <location>
        <position position="20"/>
    </location>
</feature>
<accession>Q09YN0</accession>
<organism>
    <name type="scientific">Oryctolagus cuniculus</name>
    <name type="common">Rabbit</name>
    <dbReference type="NCBI Taxonomy" id="9986"/>
    <lineage>
        <taxon>Eukaryota</taxon>
        <taxon>Metazoa</taxon>
        <taxon>Chordata</taxon>
        <taxon>Craniata</taxon>
        <taxon>Vertebrata</taxon>
        <taxon>Euteleostomi</taxon>
        <taxon>Mammalia</taxon>
        <taxon>Eutheria</taxon>
        <taxon>Euarchontoglires</taxon>
        <taxon>Glires</taxon>
        <taxon>Lagomorpha</taxon>
        <taxon>Leporidae</taxon>
        <taxon>Oryctolagus</taxon>
    </lineage>
</organism>
<protein>
    <recommendedName>
        <fullName>Ankyrin repeat, SAM and basic leucine zipper domain-containing protein 1</fullName>
    </recommendedName>
    <alternativeName>
        <fullName>Germ cell-specific ankyrin, SAM and basic leucine zipper domain-containing protein</fullName>
    </alternativeName>
</protein>
<dbReference type="EMBL" id="DP000006">
    <property type="protein sequence ID" value="AAY89017.1"/>
    <property type="molecule type" value="Genomic_DNA"/>
</dbReference>
<dbReference type="RefSeq" id="NP_001164490.1">
    <property type="nucleotide sequence ID" value="NM_001171019.1"/>
</dbReference>
<dbReference type="SMR" id="Q09YN0"/>
<dbReference type="FunCoup" id="Q09YN0">
    <property type="interactions" value="42"/>
</dbReference>
<dbReference type="STRING" id="9986.ENSOCUP00000013721"/>
<dbReference type="PaxDb" id="9986-ENSOCUP00000013721"/>
<dbReference type="Ensembl" id="ENSOCUT00000015964.4">
    <property type="protein sequence ID" value="ENSOCUP00000013721.2"/>
    <property type="gene ID" value="ENSOCUG00000015962.4"/>
</dbReference>
<dbReference type="GeneID" id="100126561"/>
<dbReference type="KEGG" id="ocu:100126561"/>
<dbReference type="CTD" id="136991"/>
<dbReference type="eggNOG" id="KOG0504">
    <property type="taxonomic scope" value="Eukaryota"/>
</dbReference>
<dbReference type="GeneTree" id="ENSGT00880000138051"/>
<dbReference type="HOGENOM" id="CLU_053259_0_0_1"/>
<dbReference type="InParanoid" id="Q09YN0"/>
<dbReference type="OMA" id="FVCKLTF"/>
<dbReference type="OrthoDB" id="439236at2759"/>
<dbReference type="TreeFam" id="TF352216"/>
<dbReference type="Proteomes" id="UP000001811">
    <property type="component" value="Chromosome 7"/>
</dbReference>
<dbReference type="Bgee" id="ENSOCUG00000015962">
    <property type="expression patterns" value="Expressed in upper lobe of left lung and 3 other cell types or tissues"/>
</dbReference>
<dbReference type="GO" id="GO:0071546">
    <property type="term" value="C:pi-body"/>
    <property type="evidence" value="ECO:0000250"/>
    <property type="project" value="UniProtKB"/>
</dbReference>
<dbReference type="GO" id="GO:0030154">
    <property type="term" value="P:cell differentiation"/>
    <property type="evidence" value="ECO:0007669"/>
    <property type="project" value="UniProtKB-KW"/>
</dbReference>
<dbReference type="GO" id="GO:0007140">
    <property type="term" value="P:male meiotic nuclear division"/>
    <property type="evidence" value="ECO:0000250"/>
    <property type="project" value="UniProtKB"/>
</dbReference>
<dbReference type="GO" id="GO:0031047">
    <property type="term" value="P:regulatory ncRNA-mediated gene silencing"/>
    <property type="evidence" value="ECO:0007669"/>
    <property type="project" value="UniProtKB-KW"/>
</dbReference>
<dbReference type="GO" id="GO:0007283">
    <property type="term" value="P:spermatogenesis"/>
    <property type="evidence" value="ECO:0000250"/>
    <property type="project" value="UniProtKB"/>
</dbReference>
<dbReference type="GO" id="GO:0010526">
    <property type="term" value="P:transposable element silencing"/>
    <property type="evidence" value="ECO:0000250"/>
    <property type="project" value="UniProtKB"/>
</dbReference>
<dbReference type="CDD" id="cd09521">
    <property type="entry name" value="SAM_ASZ1"/>
    <property type="match status" value="1"/>
</dbReference>
<dbReference type="FunFam" id="1.25.40.20:FF:000192">
    <property type="entry name" value="Ankyrin repeat, SAM and basic leucine zipper domain-containing 1"/>
    <property type="match status" value="1"/>
</dbReference>
<dbReference type="FunFam" id="1.10.150.50:FF:000060">
    <property type="entry name" value="Ankyrin repeat, SAM and basic leucine zipper domain-containing protein 1"/>
    <property type="match status" value="1"/>
</dbReference>
<dbReference type="Gene3D" id="1.25.40.20">
    <property type="entry name" value="Ankyrin repeat-containing domain"/>
    <property type="match status" value="1"/>
</dbReference>
<dbReference type="Gene3D" id="1.10.150.50">
    <property type="entry name" value="Transcription Factor, Ets-1"/>
    <property type="match status" value="1"/>
</dbReference>
<dbReference type="InterPro" id="IPR002110">
    <property type="entry name" value="Ankyrin_rpt"/>
</dbReference>
<dbReference type="InterPro" id="IPR036770">
    <property type="entry name" value="Ankyrin_rpt-contain_sf"/>
</dbReference>
<dbReference type="InterPro" id="IPR042650">
    <property type="entry name" value="Asz1_SAM"/>
</dbReference>
<dbReference type="InterPro" id="IPR001660">
    <property type="entry name" value="SAM"/>
</dbReference>
<dbReference type="InterPro" id="IPR013761">
    <property type="entry name" value="SAM/pointed_sf"/>
</dbReference>
<dbReference type="PANTHER" id="PTHR24157">
    <property type="entry name" value="ANKYRIN REPEAT, SAM AND BASIC LEUCINE ZIPPER DOMAIN-CONTAINING PROTEIN 1"/>
    <property type="match status" value="1"/>
</dbReference>
<dbReference type="PANTHER" id="PTHR24157:SF3">
    <property type="entry name" value="ANKYRIN REPEAT, SAM AND BASIC LEUCINE ZIPPER DOMAIN-CONTAINING PROTEIN 1"/>
    <property type="match status" value="1"/>
</dbReference>
<dbReference type="Pfam" id="PF12796">
    <property type="entry name" value="Ank_2"/>
    <property type="match status" value="1"/>
</dbReference>
<dbReference type="Pfam" id="PF13637">
    <property type="entry name" value="Ank_4"/>
    <property type="match status" value="1"/>
</dbReference>
<dbReference type="Pfam" id="PF07647">
    <property type="entry name" value="SAM_2"/>
    <property type="match status" value="1"/>
</dbReference>
<dbReference type="PRINTS" id="PR01415">
    <property type="entry name" value="ANKYRIN"/>
</dbReference>
<dbReference type="SMART" id="SM00248">
    <property type="entry name" value="ANK"/>
    <property type="match status" value="5"/>
</dbReference>
<dbReference type="SUPFAM" id="SSF48403">
    <property type="entry name" value="Ankyrin repeat"/>
    <property type="match status" value="1"/>
</dbReference>
<dbReference type="SUPFAM" id="SSF140860">
    <property type="entry name" value="Pseudo ankyrin repeat-like"/>
    <property type="match status" value="1"/>
</dbReference>
<dbReference type="SUPFAM" id="SSF47769">
    <property type="entry name" value="SAM/Pointed domain"/>
    <property type="match status" value="1"/>
</dbReference>
<dbReference type="PROSITE" id="PS50297">
    <property type="entry name" value="ANK_REP_REGION"/>
    <property type="match status" value="1"/>
</dbReference>
<dbReference type="PROSITE" id="PS50088">
    <property type="entry name" value="ANK_REPEAT"/>
    <property type="match status" value="3"/>
</dbReference>
<evidence type="ECO:0000250" key="1"/>
<evidence type="ECO:0000250" key="2">
    <source>
        <dbReference type="UniProtKB" id="Q8VD46"/>
    </source>
</evidence>
<evidence type="ECO:0000256" key="3">
    <source>
        <dbReference type="SAM" id="MobiDB-lite"/>
    </source>
</evidence>
<sequence length="475" mass="53041">MATGSLRGLAVAGGGESSDSEDDGWEIGYLDRPPQKLKGPLPIEEKNETFKKALTTGDTSLVKELLDSGISVDSSFRYGWTPLMYAASVANVELVRVLLDRGANASFDKDKQTILITACSARGSEEQILKCVELLLSRNADPNVACRRLMTPIMYAARDGHPQVVALLVAHGAEVNIQDENGYTALTWAARQGHKSVVLKLLELGANKTLQTKDGKTPSEIAKRNKHLEIFNLLSLTLNPLEGKLQQLTKEETICKLLTTDSDKEKDHIFSSYTAFGDLEIFLHGLGLEHMTDLLKERDITLRHLLTMRKDEFTQNGITSKDQQKILAALKELEVEEIKFGELPEVAKLEISGDEFLNFLLKLNKQCGHLITAVQNIITELPVNSHKIVLEWASPRNFTSVCEELVSNVEDLNEEVCKLKDLIQKLQNERENDPTHIPLMEEVSTWNSKILKRTAVTVCGFGFLLFICKLTFQRK</sequence>
<reference key="1">
    <citation type="submission" date="2006-09" db="EMBL/GenBank/DDBJ databases">
        <title>NISC comparative sequencing initiative.</title>
        <authorList>
            <person name="Antonellis A."/>
            <person name="Ayele K."/>
            <person name="Benjamin B."/>
            <person name="Blakesley R.W."/>
            <person name="Boakye A."/>
            <person name="Bouffard G.G."/>
            <person name="Brinkley C."/>
            <person name="Brooks S."/>
            <person name="Chu G."/>
            <person name="Coleman H."/>
            <person name="Engle J."/>
            <person name="Gestole M."/>
            <person name="Greene A."/>
            <person name="Guan X."/>
            <person name="Gupta J."/>
            <person name="Haghighi P."/>
            <person name="Han J."/>
            <person name="Hansen N."/>
            <person name="Ho S.-L."/>
            <person name="Hu P."/>
            <person name="Hunter G."/>
            <person name="Hurle B."/>
            <person name="Idol J.R."/>
            <person name="Kwong P."/>
            <person name="Laric P."/>
            <person name="Larson S."/>
            <person name="Lee-Lin S.-Q."/>
            <person name="Legaspi R."/>
            <person name="Madden M."/>
            <person name="Maduro Q.L."/>
            <person name="Maduro V.B."/>
            <person name="Margulies E.H."/>
            <person name="Masiello C."/>
            <person name="Maskeri B."/>
            <person name="McDowell J."/>
            <person name="Mojidi H.A."/>
            <person name="Mullikin J.C."/>
            <person name="Oestreicher J.S."/>
            <person name="Park M."/>
            <person name="Portnoy M.E."/>
            <person name="Prasad A."/>
            <person name="Puri O."/>
            <person name="Reddix-Dugue N."/>
            <person name="Schandler K."/>
            <person name="Schueler M.G."/>
            <person name="Sison C."/>
            <person name="Stantripop S."/>
            <person name="Stephen E."/>
            <person name="Taye A."/>
            <person name="Thomas J.W."/>
            <person name="Thomas P.J."/>
            <person name="Tsipouri V."/>
            <person name="Ung L."/>
            <person name="Vogt J.L."/>
            <person name="Wetherby K.D."/>
            <person name="Young A."/>
            <person name="Green E.D."/>
        </authorList>
    </citation>
    <scope>NUCLEOTIDE SEQUENCE [LARGE SCALE GENOMIC DNA]</scope>
</reference>